<feature type="chain" id="PRO_0000222593" description="Movement protein TGB2">
    <location>
        <begin position="1"/>
        <end position="116"/>
    </location>
</feature>
<feature type="topological domain" description="Cytoplasmic" evidence="1">
    <location>
        <begin position="1"/>
        <end position="11"/>
    </location>
</feature>
<feature type="transmembrane region" description="Helical" evidence="2">
    <location>
        <begin position="12"/>
        <end position="32"/>
    </location>
</feature>
<feature type="topological domain" description="Lumenal" evidence="1">
    <location>
        <begin position="33"/>
        <end position="77"/>
    </location>
</feature>
<feature type="transmembrane region" description="Helical" evidence="2">
    <location>
        <begin position="78"/>
        <end position="98"/>
    </location>
</feature>
<feature type="topological domain" description="Cytoplasmic" evidence="1">
    <location>
        <begin position="99"/>
        <end position="116"/>
    </location>
</feature>
<gene>
    <name type="ORF">ORF3</name>
</gene>
<proteinExistence type="inferred from homology"/>
<keyword id="KW-1038">Host endoplasmic reticulum</keyword>
<keyword id="KW-1043">Host membrane</keyword>
<keyword id="KW-0472">Membrane</keyword>
<keyword id="KW-1185">Reference proteome</keyword>
<keyword id="KW-0812">Transmembrane</keyword>
<keyword id="KW-1133">Transmembrane helix</keyword>
<keyword id="KW-0813">Transport</keyword>
<keyword id="KW-0916">Viral movement protein</keyword>
<evidence type="ECO:0000250" key="1"/>
<evidence type="ECO:0000255" key="2"/>
<evidence type="ECO:0000305" key="3"/>
<protein>
    <recommendedName>
        <fullName>Movement protein TGB2</fullName>
    </recommendedName>
    <alternativeName>
        <fullName>13 kDa protein</fullName>
    </alternativeName>
    <alternativeName>
        <fullName>Triple gene block 2 protein</fullName>
        <shortName>TGBp2</shortName>
    </alternativeName>
</protein>
<organism>
    <name type="scientific">White clover mosaic virus (strain M)</name>
    <name type="common">WCMV</name>
    <dbReference type="NCBI Taxonomy" id="12189"/>
    <lineage>
        <taxon>Viruses</taxon>
        <taxon>Riboviria</taxon>
        <taxon>Orthornavirae</taxon>
        <taxon>Kitrinoviricota</taxon>
        <taxon>Alsuviricetes</taxon>
        <taxon>Tymovirales</taxon>
        <taxon>Alphaflexiviridae</taxon>
        <taxon>Potexvirus</taxon>
        <taxon>White clover mosaic virus</taxon>
    </lineage>
</organism>
<accession>P09500</accession>
<sequence>MPLTPPPNPQKTYQIAILALGLVLLAFVLISDHSPKVGDHLHNLPFGGEYKDGTKSIKYFQRPNQHSLSKTLAKSHNTTIFLLILGLIVTLHGLHYFNNNRRVSSSLHCVLCQNKH</sequence>
<name>TGB2_WCMVM</name>
<organismHost>
    <name type="scientific">Trifolium</name>
    <dbReference type="NCBI Taxonomy" id="3898"/>
</organismHost>
<reference key="1">
    <citation type="journal article" date="1988" name="Nucleic Acids Res.">
        <title>The complete nucleotide sequence of the potexvirus white clover mosaic virus.</title>
        <authorList>
            <person name="Forster R.L.S."/>
            <person name="Bevan M.W."/>
            <person name="Harbison S.-A."/>
            <person name="Gardner R.C."/>
        </authorList>
    </citation>
    <scope>NUCLEOTIDE SEQUENCE [GENOMIC RNA]</scope>
</reference>
<reference key="2">
    <citation type="journal article" date="1988" name="Virology">
        <title>Organization and interviral homologies of the coat protein gene of white clover mosaic virus.</title>
        <authorList>
            <person name="Harbison S.-A."/>
            <person name="Forster R.L.S."/>
            <person name="Guilford P.J."/>
            <person name="Gardner R.C."/>
        </authorList>
    </citation>
    <scope>NUCLEOTIDE SEQUENCE [GENOMIC RNA]</scope>
</reference>
<reference key="3">
    <citation type="journal article" date="2005" name="Mol. Plant Microbe Interact.">
        <title>A new cell-to-cell transport model for Potexviruses.</title>
        <authorList>
            <person name="Verchot-Lubicz J."/>
        </authorList>
    </citation>
    <scope>REVIEW</scope>
</reference>
<dbReference type="EMBL" id="X06728">
    <property type="protein sequence ID" value="CAA29906.1"/>
    <property type="molecule type" value="Genomic_RNA"/>
</dbReference>
<dbReference type="EMBL" id="M18920">
    <property type="protein sequence ID" value="AAA69636.1"/>
    <property type="molecule type" value="Genomic_RNA"/>
</dbReference>
<dbReference type="PIR" id="B34002">
    <property type="entry name" value="B34002"/>
</dbReference>
<dbReference type="RefSeq" id="NP_620717.1">
    <property type="nucleotide sequence ID" value="NC_003820.1"/>
</dbReference>
<dbReference type="SMR" id="P09500"/>
<dbReference type="KEGG" id="vg:944399"/>
<dbReference type="Proteomes" id="UP000007627">
    <property type="component" value="Segment"/>
</dbReference>
<dbReference type="GO" id="GO:0044167">
    <property type="term" value="C:host cell endoplasmic reticulum membrane"/>
    <property type="evidence" value="ECO:0007669"/>
    <property type="project" value="UniProtKB-SubCell"/>
</dbReference>
<dbReference type="GO" id="GO:0016020">
    <property type="term" value="C:membrane"/>
    <property type="evidence" value="ECO:0007669"/>
    <property type="project" value="UniProtKB-KW"/>
</dbReference>
<dbReference type="GO" id="GO:0046740">
    <property type="term" value="P:transport of virus in host, cell to cell"/>
    <property type="evidence" value="ECO:0007669"/>
    <property type="project" value="UniProtKB-KW"/>
</dbReference>
<dbReference type="InterPro" id="IPR001896">
    <property type="entry name" value="Plant_vir_prot"/>
</dbReference>
<dbReference type="Pfam" id="PF01307">
    <property type="entry name" value="Plant_vir_prot"/>
    <property type="match status" value="1"/>
</dbReference>
<comment type="function">
    <text evidence="1">Plays a role in viral cell-to-cell propagation, by facilitating genome transport to neighboring plant cells through plasmosdesmata,.</text>
</comment>
<comment type="subcellular location">
    <subcellularLocation>
        <location evidence="1">Host endoplasmic reticulum membrane</location>
    </subcellularLocation>
</comment>
<comment type="miscellaneous">
    <text>TGBp1, TGBp2 and TGBp3 seem to act together for cell-to-cell propagation. TGBp1 is the main movement protein that physically cross the plasmodesma with the viral genome. TGBp2 and TGBp3 would facilitate TGBp1 function.</text>
</comment>
<comment type="similarity">
    <text evidence="3">Belongs to the Tymovirales TGBp2 protein family.</text>
</comment>